<dbReference type="EC" id="2.3.2.29" evidence="1"/>
<dbReference type="EMBL" id="CP000075">
    <property type="protein sequence ID" value="AAY38213.1"/>
    <property type="molecule type" value="Genomic_DNA"/>
</dbReference>
<dbReference type="RefSeq" id="WP_011268269.1">
    <property type="nucleotide sequence ID" value="NC_007005.1"/>
</dbReference>
<dbReference type="RefSeq" id="YP_236251.1">
    <property type="nucleotide sequence ID" value="NC_007005.1"/>
</dbReference>
<dbReference type="SMR" id="Q4ZRK9"/>
<dbReference type="STRING" id="205918.Psyr_3181"/>
<dbReference type="KEGG" id="psb:Psyr_3181"/>
<dbReference type="PATRIC" id="fig|205918.7.peg.3247"/>
<dbReference type="eggNOG" id="COG2935">
    <property type="taxonomic scope" value="Bacteria"/>
</dbReference>
<dbReference type="HOGENOM" id="CLU_077607_0_0_6"/>
<dbReference type="OrthoDB" id="9782022at2"/>
<dbReference type="Proteomes" id="UP000000426">
    <property type="component" value="Chromosome"/>
</dbReference>
<dbReference type="GO" id="GO:0005737">
    <property type="term" value="C:cytoplasm"/>
    <property type="evidence" value="ECO:0007669"/>
    <property type="project" value="UniProtKB-SubCell"/>
</dbReference>
<dbReference type="GO" id="GO:0004057">
    <property type="term" value="F:arginyl-tRNA--protein transferase activity"/>
    <property type="evidence" value="ECO:0007669"/>
    <property type="project" value="InterPro"/>
</dbReference>
<dbReference type="GO" id="GO:0008914">
    <property type="term" value="F:leucyl-tRNA--protein transferase activity"/>
    <property type="evidence" value="ECO:0007669"/>
    <property type="project" value="UniProtKB-UniRule"/>
</dbReference>
<dbReference type="GO" id="GO:0071596">
    <property type="term" value="P:ubiquitin-dependent protein catabolic process via the N-end rule pathway"/>
    <property type="evidence" value="ECO:0007669"/>
    <property type="project" value="InterPro"/>
</dbReference>
<dbReference type="HAMAP" id="MF_00689">
    <property type="entry name" value="Bpt"/>
    <property type="match status" value="1"/>
</dbReference>
<dbReference type="InterPro" id="IPR016181">
    <property type="entry name" value="Acyl_CoA_acyltransferase"/>
</dbReference>
<dbReference type="InterPro" id="IPR017138">
    <property type="entry name" value="Asp_Glu_LeuTrfase"/>
</dbReference>
<dbReference type="InterPro" id="IPR030700">
    <property type="entry name" value="N-end_Aminoacyl_Trfase"/>
</dbReference>
<dbReference type="InterPro" id="IPR007472">
    <property type="entry name" value="N-end_Aminoacyl_Trfase_C"/>
</dbReference>
<dbReference type="InterPro" id="IPR007471">
    <property type="entry name" value="N-end_Aminoacyl_Trfase_N"/>
</dbReference>
<dbReference type="NCBIfam" id="NF002341">
    <property type="entry name" value="PRK01305.1-1"/>
    <property type="match status" value="1"/>
</dbReference>
<dbReference type="NCBIfam" id="NF002342">
    <property type="entry name" value="PRK01305.1-3"/>
    <property type="match status" value="1"/>
</dbReference>
<dbReference type="NCBIfam" id="NF002345">
    <property type="entry name" value="PRK01305.2-2"/>
    <property type="match status" value="1"/>
</dbReference>
<dbReference type="NCBIfam" id="NF002346">
    <property type="entry name" value="PRK01305.2-3"/>
    <property type="match status" value="1"/>
</dbReference>
<dbReference type="PANTHER" id="PTHR21367">
    <property type="entry name" value="ARGININE-TRNA-PROTEIN TRANSFERASE 1"/>
    <property type="match status" value="1"/>
</dbReference>
<dbReference type="PANTHER" id="PTHR21367:SF1">
    <property type="entry name" value="ARGINYL-TRNA--PROTEIN TRANSFERASE 1"/>
    <property type="match status" value="1"/>
</dbReference>
<dbReference type="Pfam" id="PF04377">
    <property type="entry name" value="ATE_C"/>
    <property type="match status" value="1"/>
</dbReference>
<dbReference type="Pfam" id="PF04376">
    <property type="entry name" value="ATE_N"/>
    <property type="match status" value="1"/>
</dbReference>
<dbReference type="PIRSF" id="PIRSF037208">
    <property type="entry name" value="ATE_pro_prd"/>
    <property type="match status" value="1"/>
</dbReference>
<dbReference type="SUPFAM" id="SSF55729">
    <property type="entry name" value="Acyl-CoA N-acyltransferases (Nat)"/>
    <property type="match status" value="1"/>
</dbReference>
<evidence type="ECO:0000255" key="1">
    <source>
        <dbReference type="HAMAP-Rule" id="MF_00689"/>
    </source>
</evidence>
<reference key="1">
    <citation type="journal article" date="2005" name="Proc. Natl. Acad. Sci. U.S.A.">
        <title>Comparison of the complete genome sequences of Pseudomonas syringae pv. syringae B728a and pv. tomato DC3000.</title>
        <authorList>
            <person name="Feil H."/>
            <person name="Feil W.S."/>
            <person name="Chain P."/>
            <person name="Larimer F."/>
            <person name="Dibartolo G."/>
            <person name="Copeland A."/>
            <person name="Lykidis A."/>
            <person name="Trong S."/>
            <person name="Nolan M."/>
            <person name="Goltsman E."/>
            <person name="Thiel J."/>
            <person name="Malfatti S."/>
            <person name="Loper J.E."/>
            <person name="Lapidus A."/>
            <person name="Detter J.C."/>
            <person name="Land M."/>
            <person name="Richardson P.M."/>
            <person name="Kyrpides N.C."/>
            <person name="Ivanova N."/>
            <person name="Lindow S.E."/>
        </authorList>
    </citation>
    <scope>NUCLEOTIDE SEQUENCE [LARGE SCALE GENOMIC DNA]</scope>
    <source>
        <strain>B728a</strain>
    </source>
</reference>
<proteinExistence type="inferred from homology"/>
<comment type="function">
    <text evidence="1">Functions in the N-end rule pathway of protein degradation where it conjugates Leu from its aminoacyl-tRNA to the N-termini of proteins containing an N-terminal aspartate or glutamate.</text>
</comment>
<comment type="catalytic activity">
    <reaction evidence="1">
        <text>N-terminal L-glutamyl-[protein] + L-leucyl-tRNA(Leu) = N-terminal L-leucyl-L-glutamyl-[protein] + tRNA(Leu) + H(+)</text>
        <dbReference type="Rhea" id="RHEA:50412"/>
        <dbReference type="Rhea" id="RHEA-COMP:9613"/>
        <dbReference type="Rhea" id="RHEA-COMP:9622"/>
        <dbReference type="Rhea" id="RHEA-COMP:12664"/>
        <dbReference type="Rhea" id="RHEA-COMP:12668"/>
        <dbReference type="ChEBI" id="CHEBI:15378"/>
        <dbReference type="ChEBI" id="CHEBI:64721"/>
        <dbReference type="ChEBI" id="CHEBI:78442"/>
        <dbReference type="ChEBI" id="CHEBI:78494"/>
        <dbReference type="ChEBI" id="CHEBI:133041"/>
        <dbReference type="EC" id="2.3.2.29"/>
    </reaction>
</comment>
<comment type="catalytic activity">
    <reaction evidence="1">
        <text>N-terminal L-aspartyl-[protein] + L-leucyl-tRNA(Leu) = N-terminal L-leucyl-L-aspartyl-[protein] + tRNA(Leu) + H(+)</text>
        <dbReference type="Rhea" id="RHEA:50420"/>
        <dbReference type="Rhea" id="RHEA-COMP:9613"/>
        <dbReference type="Rhea" id="RHEA-COMP:9622"/>
        <dbReference type="Rhea" id="RHEA-COMP:12669"/>
        <dbReference type="Rhea" id="RHEA-COMP:12674"/>
        <dbReference type="ChEBI" id="CHEBI:15378"/>
        <dbReference type="ChEBI" id="CHEBI:64720"/>
        <dbReference type="ChEBI" id="CHEBI:78442"/>
        <dbReference type="ChEBI" id="CHEBI:78494"/>
        <dbReference type="ChEBI" id="CHEBI:133042"/>
        <dbReference type="EC" id="2.3.2.29"/>
    </reaction>
</comment>
<comment type="subcellular location">
    <subcellularLocation>
        <location evidence="1">Cytoplasm</location>
    </subcellularLocation>
</comment>
<comment type="similarity">
    <text evidence="1">Belongs to the R-transferase family. Bpt subfamily.</text>
</comment>
<organism>
    <name type="scientific">Pseudomonas syringae pv. syringae (strain B728a)</name>
    <dbReference type="NCBI Taxonomy" id="205918"/>
    <lineage>
        <taxon>Bacteria</taxon>
        <taxon>Pseudomonadati</taxon>
        <taxon>Pseudomonadota</taxon>
        <taxon>Gammaproteobacteria</taxon>
        <taxon>Pseudomonadales</taxon>
        <taxon>Pseudomonadaceae</taxon>
        <taxon>Pseudomonas</taxon>
        <taxon>Pseudomonas syringae</taxon>
    </lineage>
</organism>
<gene>
    <name evidence="1" type="primary">bpt</name>
    <name type="ordered locus">Psyr_3181</name>
</gene>
<protein>
    <recommendedName>
        <fullName evidence="1">Aspartate/glutamate leucyltransferase</fullName>
        <ecNumber evidence="1">2.3.2.29</ecNumber>
    </recommendedName>
</protein>
<name>BPT_PSEU2</name>
<sequence>MTELARLKFYATQPHTCSYLPEEQATTLFLDPSQPMDVQVYADLSDMGFRRSGDHLYRPHCQNCSACVPARIPVNLFIPDRQQKRILKRNVDIQVQSAKPAFTQEYFDLYQRYIEQRHADGDMFPPSQEQFSTFLVRDLPFSRFYEFRVDQRLLAVAVTDLLPNGLSAVYTFYEPDEERRSLGRYAILWQIAEAARLQLQAVYLGYWIKNCKKMNYKTQYRPIELLTNQRWVTLY</sequence>
<keyword id="KW-0012">Acyltransferase</keyword>
<keyword id="KW-0963">Cytoplasm</keyword>
<keyword id="KW-0808">Transferase</keyword>
<feature type="chain" id="PRO_0000263204" description="Aspartate/glutamate leucyltransferase">
    <location>
        <begin position="1"/>
        <end position="235"/>
    </location>
</feature>
<accession>Q4ZRK9</accession>